<gene>
    <name evidence="1" type="primary">hmuV</name>
    <name type="ordered locus">PFL_5264</name>
</gene>
<proteinExistence type="inferred from homology"/>
<keyword id="KW-0067">ATP-binding</keyword>
<keyword id="KW-0997">Cell inner membrane</keyword>
<keyword id="KW-1003">Cell membrane</keyword>
<keyword id="KW-0472">Membrane</keyword>
<keyword id="KW-0547">Nucleotide-binding</keyword>
<keyword id="KW-1278">Translocase</keyword>
<keyword id="KW-0813">Transport</keyword>
<reference key="1">
    <citation type="journal article" date="2005" name="Nat. Biotechnol.">
        <title>Complete genome sequence of the plant commensal Pseudomonas fluorescens Pf-5.</title>
        <authorList>
            <person name="Paulsen I.T."/>
            <person name="Press C.M."/>
            <person name="Ravel J."/>
            <person name="Kobayashi D.Y."/>
            <person name="Myers G.S.A."/>
            <person name="Mavrodi D.V."/>
            <person name="DeBoy R.T."/>
            <person name="Seshadri R."/>
            <person name="Ren Q."/>
            <person name="Madupu R."/>
            <person name="Dodson R.J."/>
            <person name="Durkin A.S."/>
            <person name="Brinkac L.M."/>
            <person name="Daugherty S.C."/>
            <person name="Sullivan S.A."/>
            <person name="Rosovitz M.J."/>
            <person name="Gwinn M.L."/>
            <person name="Zhou L."/>
            <person name="Schneider D.J."/>
            <person name="Cartinhour S.W."/>
            <person name="Nelson W.C."/>
            <person name="Weidman J."/>
            <person name="Watkins K."/>
            <person name="Tran K."/>
            <person name="Khouri H."/>
            <person name="Pierson E.A."/>
            <person name="Pierson L.S. III"/>
            <person name="Thomashow L.S."/>
            <person name="Loper J.E."/>
        </authorList>
    </citation>
    <scope>NUCLEOTIDE SEQUENCE [LARGE SCALE GENOMIC DNA]</scope>
    <source>
        <strain>ATCC BAA-477 / NRRL B-23932 / Pf-5</strain>
    </source>
</reference>
<name>HMUV_PSEF5</name>
<feature type="chain" id="PRO_0000269610" description="Hemin import ATP-binding protein HmuV">
    <location>
        <begin position="1"/>
        <end position="255"/>
    </location>
</feature>
<feature type="domain" description="ABC transporter" evidence="1">
    <location>
        <begin position="2"/>
        <end position="238"/>
    </location>
</feature>
<feature type="binding site" evidence="1">
    <location>
        <begin position="34"/>
        <end position="41"/>
    </location>
    <ligand>
        <name>ATP</name>
        <dbReference type="ChEBI" id="CHEBI:30616"/>
    </ligand>
</feature>
<organism>
    <name type="scientific">Pseudomonas fluorescens (strain ATCC BAA-477 / NRRL B-23932 / Pf-5)</name>
    <dbReference type="NCBI Taxonomy" id="220664"/>
    <lineage>
        <taxon>Bacteria</taxon>
        <taxon>Pseudomonadati</taxon>
        <taxon>Pseudomonadota</taxon>
        <taxon>Gammaproteobacteria</taxon>
        <taxon>Pseudomonadales</taxon>
        <taxon>Pseudomonadaceae</taxon>
        <taxon>Pseudomonas</taxon>
    </lineage>
</organism>
<accession>Q4K5Z7</accession>
<sequence length="255" mass="27387">MLRVENLHVRRGGKDVLAGIDLQLLPGEVLGVLGPNGAGKSSLLGGLSGELAAHQGQVLLDDQELAHWSGAERAQRLAVLPQASSLDFAFRVEEVVALGRLPHQTGRVRDEEIVNAALNAADVAHLSGRSYLALSGGERQRVHLARVLAQLWPGQPGHNLLLDEPTSALDPLHQHVTLQAIRAFADRGAAVLVILHDLNLAARYCDRVLLLEGGRPHSLGTPTAVLRPEPLKAVFGLEVLVQEHPERGHPLIIAR</sequence>
<dbReference type="EC" id="7.6.2.-" evidence="1"/>
<dbReference type="EMBL" id="CP000076">
    <property type="protein sequence ID" value="AAY94478.1"/>
    <property type="molecule type" value="Genomic_DNA"/>
</dbReference>
<dbReference type="RefSeq" id="WP_011063498.1">
    <property type="nucleotide sequence ID" value="NC_004129.6"/>
</dbReference>
<dbReference type="SMR" id="Q4K5Z7"/>
<dbReference type="STRING" id="220664.PFL_5264"/>
<dbReference type="KEGG" id="pfl:PFL_5264"/>
<dbReference type="PATRIC" id="fig|220664.5.peg.5376"/>
<dbReference type="eggNOG" id="COG4559">
    <property type="taxonomic scope" value="Bacteria"/>
</dbReference>
<dbReference type="HOGENOM" id="CLU_000604_1_11_6"/>
<dbReference type="Proteomes" id="UP000008540">
    <property type="component" value="Chromosome"/>
</dbReference>
<dbReference type="GO" id="GO:0005886">
    <property type="term" value="C:plasma membrane"/>
    <property type="evidence" value="ECO:0007669"/>
    <property type="project" value="UniProtKB-SubCell"/>
</dbReference>
<dbReference type="GO" id="GO:0005524">
    <property type="term" value="F:ATP binding"/>
    <property type="evidence" value="ECO:0007669"/>
    <property type="project" value="UniProtKB-KW"/>
</dbReference>
<dbReference type="GO" id="GO:0016887">
    <property type="term" value="F:ATP hydrolysis activity"/>
    <property type="evidence" value="ECO:0007669"/>
    <property type="project" value="InterPro"/>
</dbReference>
<dbReference type="CDD" id="cd03214">
    <property type="entry name" value="ABC_Iron-Siderophores_B12_Hemin"/>
    <property type="match status" value="1"/>
</dbReference>
<dbReference type="Gene3D" id="3.40.50.300">
    <property type="entry name" value="P-loop containing nucleotide triphosphate hydrolases"/>
    <property type="match status" value="1"/>
</dbReference>
<dbReference type="InterPro" id="IPR003593">
    <property type="entry name" value="AAA+_ATPase"/>
</dbReference>
<dbReference type="InterPro" id="IPR003439">
    <property type="entry name" value="ABC_transporter-like_ATP-bd"/>
</dbReference>
<dbReference type="InterPro" id="IPR027417">
    <property type="entry name" value="P-loop_NTPase"/>
</dbReference>
<dbReference type="NCBIfam" id="NF010068">
    <property type="entry name" value="PRK13548.1"/>
    <property type="match status" value="1"/>
</dbReference>
<dbReference type="PANTHER" id="PTHR42794">
    <property type="entry name" value="HEMIN IMPORT ATP-BINDING PROTEIN HMUV"/>
    <property type="match status" value="1"/>
</dbReference>
<dbReference type="PANTHER" id="PTHR42794:SF1">
    <property type="entry name" value="HEMIN IMPORT ATP-BINDING PROTEIN HMUV"/>
    <property type="match status" value="1"/>
</dbReference>
<dbReference type="Pfam" id="PF00005">
    <property type="entry name" value="ABC_tran"/>
    <property type="match status" value="1"/>
</dbReference>
<dbReference type="SMART" id="SM00382">
    <property type="entry name" value="AAA"/>
    <property type="match status" value="1"/>
</dbReference>
<dbReference type="SUPFAM" id="SSF52540">
    <property type="entry name" value="P-loop containing nucleoside triphosphate hydrolases"/>
    <property type="match status" value="1"/>
</dbReference>
<dbReference type="PROSITE" id="PS50893">
    <property type="entry name" value="ABC_TRANSPORTER_2"/>
    <property type="match status" value="1"/>
</dbReference>
<dbReference type="PROSITE" id="PS51261">
    <property type="entry name" value="HMUV"/>
    <property type="match status" value="1"/>
</dbReference>
<evidence type="ECO:0000255" key="1">
    <source>
        <dbReference type="HAMAP-Rule" id="MF_01718"/>
    </source>
</evidence>
<comment type="function">
    <text evidence="1">Part of the ABC transporter complex HmuTUV involved in hemin import. Responsible for energy coupling to the transport system.</text>
</comment>
<comment type="subunit">
    <text evidence="1">The complex is composed of two ATP-binding proteins (HmuV), two transmembrane proteins (HmuU) and a solute-binding protein (HmuT).</text>
</comment>
<comment type="subcellular location">
    <subcellularLocation>
        <location evidence="1">Cell inner membrane</location>
        <topology evidence="1">Peripheral membrane protein</topology>
    </subcellularLocation>
</comment>
<comment type="similarity">
    <text evidence="1">Belongs to the ABC transporter superfamily. Heme (hemin) importer (TC 3.A.1.14.5) family.</text>
</comment>
<protein>
    <recommendedName>
        <fullName evidence="1">Hemin import ATP-binding protein HmuV</fullName>
        <ecNumber evidence="1">7.6.2.-</ecNumber>
    </recommendedName>
</protein>